<comment type="function">
    <text evidence="1">Removes the formyl group from the N-terminal Met of newly synthesized proteins. Requires at least a dipeptide for an efficient rate of reaction. N-terminal L-methionine is a prerequisite for activity but the enzyme has broad specificity at other positions.</text>
</comment>
<comment type="catalytic activity">
    <reaction evidence="1">
        <text>N-terminal N-formyl-L-methionyl-[peptide] + H2O = N-terminal L-methionyl-[peptide] + formate</text>
        <dbReference type="Rhea" id="RHEA:24420"/>
        <dbReference type="Rhea" id="RHEA-COMP:10639"/>
        <dbReference type="Rhea" id="RHEA-COMP:10640"/>
        <dbReference type="ChEBI" id="CHEBI:15377"/>
        <dbReference type="ChEBI" id="CHEBI:15740"/>
        <dbReference type="ChEBI" id="CHEBI:49298"/>
        <dbReference type="ChEBI" id="CHEBI:64731"/>
        <dbReference type="EC" id="3.5.1.88"/>
    </reaction>
</comment>
<comment type="cofactor">
    <cofactor evidence="1">
        <name>Fe(2+)</name>
        <dbReference type="ChEBI" id="CHEBI:29033"/>
    </cofactor>
    <text evidence="1">Binds 1 Fe(2+) ion.</text>
</comment>
<comment type="similarity">
    <text evidence="1">Belongs to the polypeptide deformylase family.</text>
</comment>
<name>DEF_POLNS</name>
<reference key="1">
    <citation type="journal article" date="2013" name="Proc. Natl. Acad. Sci. U.S.A.">
        <title>Polynucleobacter necessarius, a model for genome reduction in both free-living and symbiotic bacteria.</title>
        <authorList>
            <person name="Boscaro V."/>
            <person name="Felletti M."/>
            <person name="Vannini C."/>
            <person name="Ackerman M.S."/>
            <person name="Chain P.S."/>
            <person name="Malfatti S."/>
            <person name="Vergez L.M."/>
            <person name="Shin M."/>
            <person name="Doak T.G."/>
            <person name="Lynch M."/>
            <person name="Petroni G."/>
        </authorList>
    </citation>
    <scope>NUCLEOTIDE SEQUENCE [LARGE SCALE GENOMIC DNA]</scope>
    <source>
        <strain>STIR1</strain>
    </source>
</reference>
<organism>
    <name type="scientific">Polynucleobacter necessarius subsp. necessarius (strain STIR1)</name>
    <dbReference type="NCBI Taxonomy" id="452638"/>
    <lineage>
        <taxon>Bacteria</taxon>
        <taxon>Pseudomonadati</taxon>
        <taxon>Pseudomonadota</taxon>
        <taxon>Betaproteobacteria</taxon>
        <taxon>Burkholderiales</taxon>
        <taxon>Burkholderiaceae</taxon>
        <taxon>Polynucleobacter</taxon>
    </lineage>
</organism>
<dbReference type="EC" id="3.5.1.88" evidence="1"/>
<dbReference type="EMBL" id="CP001010">
    <property type="protein sequence ID" value="ACB44831.1"/>
    <property type="molecule type" value="Genomic_DNA"/>
</dbReference>
<dbReference type="SMR" id="B1XSN2"/>
<dbReference type="STRING" id="452638.Pnec_1778"/>
<dbReference type="KEGG" id="pne:Pnec_1778"/>
<dbReference type="eggNOG" id="COG0242">
    <property type="taxonomic scope" value="Bacteria"/>
</dbReference>
<dbReference type="HOGENOM" id="CLU_061901_2_1_4"/>
<dbReference type="GO" id="GO:0046872">
    <property type="term" value="F:metal ion binding"/>
    <property type="evidence" value="ECO:0007669"/>
    <property type="project" value="UniProtKB-KW"/>
</dbReference>
<dbReference type="GO" id="GO:0042586">
    <property type="term" value="F:peptide deformylase activity"/>
    <property type="evidence" value="ECO:0007669"/>
    <property type="project" value="UniProtKB-UniRule"/>
</dbReference>
<dbReference type="GO" id="GO:0043686">
    <property type="term" value="P:co-translational protein modification"/>
    <property type="evidence" value="ECO:0007669"/>
    <property type="project" value="TreeGrafter"/>
</dbReference>
<dbReference type="GO" id="GO:0006412">
    <property type="term" value="P:translation"/>
    <property type="evidence" value="ECO:0007669"/>
    <property type="project" value="UniProtKB-UniRule"/>
</dbReference>
<dbReference type="CDD" id="cd00487">
    <property type="entry name" value="Pep_deformylase"/>
    <property type="match status" value="1"/>
</dbReference>
<dbReference type="FunFam" id="3.90.45.10:FF:000001">
    <property type="entry name" value="Peptide deformylase"/>
    <property type="match status" value="1"/>
</dbReference>
<dbReference type="Gene3D" id="3.90.45.10">
    <property type="entry name" value="Peptide deformylase"/>
    <property type="match status" value="1"/>
</dbReference>
<dbReference type="HAMAP" id="MF_00163">
    <property type="entry name" value="Pep_deformylase"/>
    <property type="match status" value="1"/>
</dbReference>
<dbReference type="InterPro" id="IPR023635">
    <property type="entry name" value="Peptide_deformylase"/>
</dbReference>
<dbReference type="InterPro" id="IPR036821">
    <property type="entry name" value="Peptide_deformylase_sf"/>
</dbReference>
<dbReference type="NCBIfam" id="TIGR00079">
    <property type="entry name" value="pept_deformyl"/>
    <property type="match status" value="1"/>
</dbReference>
<dbReference type="NCBIfam" id="NF001159">
    <property type="entry name" value="PRK00150.1-3"/>
    <property type="match status" value="1"/>
</dbReference>
<dbReference type="PANTHER" id="PTHR10458">
    <property type="entry name" value="PEPTIDE DEFORMYLASE"/>
    <property type="match status" value="1"/>
</dbReference>
<dbReference type="PANTHER" id="PTHR10458:SF22">
    <property type="entry name" value="PEPTIDE DEFORMYLASE"/>
    <property type="match status" value="1"/>
</dbReference>
<dbReference type="Pfam" id="PF01327">
    <property type="entry name" value="Pep_deformylase"/>
    <property type="match status" value="1"/>
</dbReference>
<dbReference type="PIRSF" id="PIRSF004749">
    <property type="entry name" value="Pep_def"/>
    <property type="match status" value="1"/>
</dbReference>
<dbReference type="PRINTS" id="PR01576">
    <property type="entry name" value="PDEFORMYLASE"/>
</dbReference>
<dbReference type="SUPFAM" id="SSF56420">
    <property type="entry name" value="Peptide deformylase"/>
    <property type="match status" value="1"/>
</dbReference>
<sequence>MALLTVLCYPDSRLHKVAKPVAQVDARIKKIVADMADTMYEAPGVGLAATQVDIHERIVVIDVSDEQNELMVFINPEIVWTSSETKSWREGCLSVPEFYDEVERPAEIRVKALDIDGKEFEIEADGSLAVCLQHELDHLQGKVFVEYLSIFKRTRISQKMKKRAKELIGQR</sequence>
<keyword id="KW-0378">Hydrolase</keyword>
<keyword id="KW-0408">Iron</keyword>
<keyword id="KW-0479">Metal-binding</keyword>
<keyword id="KW-0648">Protein biosynthesis</keyword>
<evidence type="ECO:0000255" key="1">
    <source>
        <dbReference type="HAMAP-Rule" id="MF_00163"/>
    </source>
</evidence>
<accession>B1XSN2</accession>
<feature type="chain" id="PRO_1000097332" description="Peptide deformylase">
    <location>
        <begin position="1"/>
        <end position="171"/>
    </location>
</feature>
<feature type="active site" evidence="1">
    <location>
        <position position="135"/>
    </location>
</feature>
<feature type="binding site" evidence="1">
    <location>
        <position position="92"/>
    </location>
    <ligand>
        <name>Fe cation</name>
        <dbReference type="ChEBI" id="CHEBI:24875"/>
    </ligand>
</feature>
<feature type="binding site" evidence="1">
    <location>
        <position position="134"/>
    </location>
    <ligand>
        <name>Fe cation</name>
        <dbReference type="ChEBI" id="CHEBI:24875"/>
    </ligand>
</feature>
<feature type="binding site" evidence="1">
    <location>
        <position position="138"/>
    </location>
    <ligand>
        <name>Fe cation</name>
        <dbReference type="ChEBI" id="CHEBI:24875"/>
    </ligand>
</feature>
<gene>
    <name evidence="1" type="primary">def</name>
    <name type="ordered locus">Pnec_1778</name>
</gene>
<protein>
    <recommendedName>
        <fullName evidence="1">Peptide deformylase</fullName>
        <shortName evidence="1">PDF</shortName>
        <ecNumber evidence="1">3.5.1.88</ecNumber>
    </recommendedName>
    <alternativeName>
        <fullName evidence="1">Polypeptide deformylase</fullName>
    </alternativeName>
</protein>
<proteinExistence type="inferred from homology"/>